<proteinExistence type="inferred from homology"/>
<keyword id="KW-0963">Cytoplasm</keyword>
<keyword id="KW-1017">Isopeptide bond</keyword>
<keyword id="KW-0576">Peroxisome</keyword>
<keyword id="KW-0653">Protein transport</keyword>
<keyword id="KW-1185">Reference proteome</keyword>
<keyword id="KW-0677">Repeat</keyword>
<keyword id="KW-0882">Thioester bond</keyword>
<keyword id="KW-0802">TPR repeat</keyword>
<keyword id="KW-0811">Translocation</keyword>
<keyword id="KW-0813">Transport</keyword>
<keyword id="KW-0832">Ubl conjugation</keyword>
<name>PEX5_DEBHA</name>
<accession>Q6BM14</accession>
<evidence type="ECO:0000250" key="1">
    <source>
        <dbReference type="UniProtKB" id="A0A1L8FDW4"/>
    </source>
</evidence>
<evidence type="ECO:0000250" key="2">
    <source>
        <dbReference type="UniProtKB" id="P35056"/>
    </source>
</evidence>
<evidence type="ECO:0000250" key="3">
    <source>
        <dbReference type="UniProtKB" id="P50542"/>
    </source>
</evidence>
<evidence type="ECO:0000256" key="4">
    <source>
        <dbReference type="SAM" id="MobiDB-lite"/>
    </source>
</evidence>
<evidence type="ECO:0000305" key="5"/>
<comment type="function">
    <text evidence="2">Receptor that mediates peroxisomal import of proteins containing a C-terminal PTS1-type tripeptide peroxisomal targeting signal (SKL-type). Binds to cargo proteins containing a PTS1 peroxisomal targeting signal in the cytosol, and translocates them into the peroxisome matrix by passing through the PEX13-PEX14 docking complex along with cargo proteins. PEX5 receptor is then retrotranslocated into the cytosol, leading to release of bound cargo in the peroxisome matrix, and reset for a subsequent peroxisome import cycle.</text>
</comment>
<comment type="subunit">
    <text evidence="2">Interacts (via WxxxF/Y and LVxEF motifs) with PEX14; promoting translocation through the PEX13-PEX14 docking complex.</text>
</comment>
<comment type="subcellular location">
    <subcellularLocation>
        <location evidence="2">Cytoplasm</location>
        <location evidence="2">Cytosol</location>
    </subcellularLocation>
    <subcellularLocation>
        <location evidence="2">Peroxisome matrix</location>
    </subcellularLocation>
    <text evidence="2 3">Cycles between the cytosol and the peroxisome matrix. Following binding to cargo proteins containing a PTS1 peroxisomal targeting signal in the cytosol, recruited to the docking complex, composed of PEX13 and PEX14, leading to translocation into the peroxisome matrix along with cargo proteins. Export and recycling to the cytosol is initiated by binding to the PEX2-PEX10-PEX12 ligase complex via its unstructured N-terminus that inserts into the ligase pore and emerges in the cytosol. Cys-10 of PEX5 is then monoubiquitinated, promoting its extraction from peroxisomal membrane by the PEX1-PEX6 AAA ATPase complex (By similarity). Extraction is accompanied by unfolding of the TPR repeats and release of bound cargo in the peroxisome matrix (By similarity). The TPR repeats refold in the cytosol and ubiquitination is removed by deubiquitinating enzyme UBP15, resetting PEX5 for a subsequent import cycle (By similarity).</text>
</comment>
<comment type="domain">
    <text evidence="1">The TPR repeats mediate interaction with proteins containing a C-terminal PTS1-type tripeptide peroxisomal targeting signal (SKL-type).</text>
</comment>
<comment type="domain">
    <text evidence="1">The WxxxF/Y motifs mediate interaction with PEX14, promoting association with the PEX13-PEX14 docking complex.</text>
</comment>
<comment type="domain">
    <text evidence="1">The amphipathic helix 1 and 2 (AH1 and AH2, respectively) are required for PEX5 retrotranslocation and recycling. AH2 mediates interaction with lumenal side of the PEX2-PEX10-PEX12 ligase complex, while AH1 is required for extraction from peroxisomal membrane by the PEX1-PEX6 AAA ATPase complex.</text>
</comment>
<comment type="PTM">
    <text evidence="2">Monoubiquitinated at Cys-10 by PEX2 during PEX5 passage through the retrotranslocation channel: monoubiquitination acts as a signal for PEX5 extraction and is required for proper export from peroxisomes and recycling. When PEX5 recycling is compromised, polyubiquitinated at Lys-22 by PEX10 during its passage through the retrotranslocation channel, leading to its degradation.</text>
</comment>
<comment type="similarity">
    <text evidence="5">Belongs to the peroxisomal targeting signal receptor family.</text>
</comment>
<reference key="1">
    <citation type="journal article" date="2004" name="Nature">
        <title>Genome evolution in yeasts.</title>
        <authorList>
            <person name="Dujon B."/>
            <person name="Sherman D."/>
            <person name="Fischer G."/>
            <person name="Durrens P."/>
            <person name="Casaregola S."/>
            <person name="Lafontaine I."/>
            <person name="de Montigny J."/>
            <person name="Marck C."/>
            <person name="Neuveglise C."/>
            <person name="Talla E."/>
            <person name="Goffard N."/>
            <person name="Frangeul L."/>
            <person name="Aigle M."/>
            <person name="Anthouard V."/>
            <person name="Babour A."/>
            <person name="Barbe V."/>
            <person name="Barnay S."/>
            <person name="Blanchin S."/>
            <person name="Beckerich J.-M."/>
            <person name="Beyne E."/>
            <person name="Bleykasten C."/>
            <person name="Boisrame A."/>
            <person name="Boyer J."/>
            <person name="Cattolico L."/>
            <person name="Confanioleri F."/>
            <person name="de Daruvar A."/>
            <person name="Despons L."/>
            <person name="Fabre E."/>
            <person name="Fairhead C."/>
            <person name="Ferry-Dumazet H."/>
            <person name="Groppi A."/>
            <person name="Hantraye F."/>
            <person name="Hennequin C."/>
            <person name="Jauniaux N."/>
            <person name="Joyet P."/>
            <person name="Kachouri R."/>
            <person name="Kerrest A."/>
            <person name="Koszul R."/>
            <person name="Lemaire M."/>
            <person name="Lesur I."/>
            <person name="Ma L."/>
            <person name="Muller H."/>
            <person name="Nicaud J.-M."/>
            <person name="Nikolski M."/>
            <person name="Oztas S."/>
            <person name="Ozier-Kalogeropoulos O."/>
            <person name="Pellenz S."/>
            <person name="Potier S."/>
            <person name="Richard G.-F."/>
            <person name="Straub M.-L."/>
            <person name="Suleau A."/>
            <person name="Swennen D."/>
            <person name="Tekaia F."/>
            <person name="Wesolowski-Louvel M."/>
            <person name="Westhof E."/>
            <person name="Wirth B."/>
            <person name="Zeniou-Meyer M."/>
            <person name="Zivanovic Y."/>
            <person name="Bolotin-Fukuhara M."/>
            <person name="Thierry A."/>
            <person name="Bouchier C."/>
            <person name="Caudron B."/>
            <person name="Scarpelli C."/>
            <person name="Gaillardin C."/>
            <person name="Weissenbach J."/>
            <person name="Wincker P."/>
            <person name="Souciet J.-L."/>
        </authorList>
    </citation>
    <scope>NUCLEOTIDE SEQUENCE [LARGE SCALE GENOMIC DNA]</scope>
    <source>
        <strain>ATCC 36239 / CBS 767 / BCRC 21394 / JCM 1990 / NBRC 0083 / IGC 2968</strain>
    </source>
</reference>
<protein>
    <recommendedName>
        <fullName>Peroxisomal targeting signal receptor</fullName>
        <shortName>PTS1 receptor</shortName>
        <shortName>PTS1R</shortName>
    </recommendedName>
    <alternativeName>
        <fullName>Peroxin-5</fullName>
    </alternativeName>
</protein>
<organism>
    <name type="scientific">Debaryomyces hansenii (strain ATCC 36239 / CBS 767 / BCRC 21394 / JCM 1990 / NBRC 0083 / IGC 2968)</name>
    <name type="common">Yeast</name>
    <name type="synonym">Torulaspora hansenii</name>
    <dbReference type="NCBI Taxonomy" id="284592"/>
    <lineage>
        <taxon>Eukaryota</taxon>
        <taxon>Fungi</taxon>
        <taxon>Dikarya</taxon>
        <taxon>Ascomycota</taxon>
        <taxon>Saccharomycotina</taxon>
        <taxon>Pichiomycetes</taxon>
        <taxon>Debaryomycetaceae</taxon>
        <taxon>Debaryomyces</taxon>
    </lineage>
</organism>
<dbReference type="EMBL" id="CR382138">
    <property type="protein sequence ID" value="CAG89098.2"/>
    <property type="molecule type" value="Genomic_DNA"/>
</dbReference>
<dbReference type="RefSeq" id="XP_460757.2">
    <property type="nucleotide sequence ID" value="XM_460757.1"/>
</dbReference>
<dbReference type="SMR" id="Q6BM14"/>
<dbReference type="FunCoup" id="Q6BM14">
    <property type="interactions" value="115"/>
</dbReference>
<dbReference type="STRING" id="284592.Q6BM14"/>
<dbReference type="GeneID" id="2903774"/>
<dbReference type="KEGG" id="dha:DEHA2F09108g"/>
<dbReference type="VEuPathDB" id="FungiDB:DEHA2F09108g"/>
<dbReference type="eggNOG" id="KOG1125">
    <property type="taxonomic scope" value="Eukaryota"/>
</dbReference>
<dbReference type="HOGENOM" id="CLU_013516_3_0_1"/>
<dbReference type="InParanoid" id="Q6BM14"/>
<dbReference type="OMA" id="WEEQFKQ"/>
<dbReference type="OrthoDB" id="10006023at2759"/>
<dbReference type="Proteomes" id="UP000000599">
    <property type="component" value="Chromosome F"/>
</dbReference>
<dbReference type="GO" id="GO:0005829">
    <property type="term" value="C:cytosol"/>
    <property type="evidence" value="ECO:0007669"/>
    <property type="project" value="UniProtKB-SubCell"/>
</dbReference>
<dbReference type="GO" id="GO:0005782">
    <property type="term" value="C:peroxisomal matrix"/>
    <property type="evidence" value="ECO:0007669"/>
    <property type="project" value="UniProtKB-SubCell"/>
</dbReference>
<dbReference type="GO" id="GO:0005778">
    <property type="term" value="C:peroxisomal membrane"/>
    <property type="evidence" value="ECO:0007669"/>
    <property type="project" value="TreeGrafter"/>
</dbReference>
<dbReference type="GO" id="GO:0005052">
    <property type="term" value="F:peroxisome matrix targeting signal-1 binding"/>
    <property type="evidence" value="ECO:0007669"/>
    <property type="project" value="TreeGrafter"/>
</dbReference>
<dbReference type="GO" id="GO:0016560">
    <property type="term" value="P:protein import into peroxisome matrix, docking"/>
    <property type="evidence" value="ECO:0007669"/>
    <property type="project" value="TreeGrafter"/>
</dbReference>
<dbReference type="FunFam" id="1.25.40.10:FF:000218">
    <property type="entry name" value="Peroxisomal targeting signal receptor"/>
    <property type="match status" value="1"/>
</dbReference>
<dbReference type="Gene3D" id="1.25.40.10">
    <property type="entry name" value="Tetratricopeptide repeat domain"/>
    <property type="match status" value="1"/>
</dbReference>
<dbReference type="InterPro" id="IPR024111">
    <property type="entry name" value="PEX5/PEX5L"/>
</dbReference>
<dbReference type="InterPro" id="IPR011990">
    <property type="entry name" value="TPR-like_helical_dom_sf"/>
</dbReference>
<dbReference type="InterPro" id="IPR019734">
    <property type="entry name" value="TPR_rpt"/>
</dbReference>
<dbReference type="PANTHER" id="PTHR10130:SF0">
    <property type="entry name" value="GH08708P"/>
    <property type="match status" value="1"/>
</dbReference>
<dbReference type="PANTHER" id="PTHR10130">
    <property type="entry name" value="PEROXISOMAL TARGETING SIGNAL 1 RECEPTOR PEX5"/>
    <property type="match status" value="1"/>
</dbReference>
<dbReference type="Pfam" id="PF00515">
    <property type="entry name" value="TPR_1"/>
    <property type="match status" value="1"/>
</dbReference>
<dbReference type="SMART" id="SM00028">
    <property type="entry name" value="TPR"/>
    <property type="match status" value="4"/>
</dbReference>
<dbReference type="SUPFAM" id="SSF48452">
    <property type="entry name" value="TPR-like"/>
    <property type="match status" value="1"/>
</dbReference>
<dbReference type="PROSITE" id="PS50005">
    <property type="entry name" value="TPR"/>
    <property type="match status" value="4"/>
</dbReference>
<dbReference type="PROSITE" id="PS50293">
    <property type="entry name" value="TPR_REGION"/>
    <property type="match status" value="1"/>
</dbReference>
<gene>
    <name type="primary">PEX5</name>
    <name type="ordered locus">DEHA2F09108g</name>
</gene>
<sequence>MSFVGGGADCSANSNAIAQFNKHTQQDRSLQRQAANQQGIVQNGQGFKKDSMMNERERQNMDQFMNNGPSQSNFQFQPMRHELNMIQQNHKQPNVQNNWTNEFQTNSPSPVQRNTPLAKTGSPANAQWATEFQQPMDQTFNQSNQQQFNNMPNMRMGGYRPMMGMSMMGGGMHQQQNQMQHQEQNQDHQVDWDNQFKEIEQLTNETKDAEAEQVKGEEEPEIVIDDKYQATFQEVWDSLNSEEVENDFINQQYEEFKNTQRDSMPADMAQWEKDFAKYASTRAHFGDYQFEDNQHNQFLDLPKESDPYEIGLQLMENGAKLSEAALAFEAAIQRNEGHINAWLKLGEVQTQNEKEIAGISALEKCLELHPENSEALMTLAISYINEGYDNAAFATLERWISTKYPQVADQARQQNPAIDDEDRFSLNKRVTELFLNAAQLSPNSANMDPDVQMGLGVLFYANEDFDKTIDCFKAALSIKPDDAVLWNRLGASLANSNRSEEAVDAYFKALELKPTFVRARYNLGVSCINIGCYKEAAEHLLSGLSMHQVEGVQTDASSTLNHNQSTSLTETLKRAFIALDRRDLLEKVKPDMDINQFRGEFSF</sequence>
<feature type="chain" id="PRO_0000106310" description="Peroxisomal targeting signal receptor">
    <location>
        <begin position="1"/>
        <end position="603"/>
    </location>
</feature>
<feature type="repeat" description="TPR 1">
    <location>
        <begin position="304"/>
        <end position="338"/>
    </location>
</feature>
<feature type="repeat" description="TPR 2">
    <location>
        <begin position="339"/>
        <end position="372"/>
    </location>
</feature>
<feature type="repeat" description="TPR 3">
    <location>
        <begin position="449"/>
        <end position="482"/>
    </location>
</feature>
<feature type="repeat" description="TPR 4">
    <location>
        <begin position="484"/>
        <end position="516"/>
    </location>
</feature>
<feature type="repeat" description="TPR 5">
    <location>
        <begin position="518"/>
        <end position="550"/>
    </location>
</feature>
<feature type="region of interest" description="Amphipathic helix 1 (AH1)" evidence="1">
    <location>
        <begin position="11"/>
        <end position="33"/>
    </location>
</feature>
<feature type="region of interest" description="Disordered" evidence="4">
    <location>
        <begin position="23"/>
        <end position="49"/>
    </location>
</feature>
<feature type="region of interest" description="Amphipathic helix 2 (AH2)" evidence="1">
    <location>
        <begin position="58"/>
        <end position="76"/>
    </location>
</feature>
<feature type="region of interest" description="Amphipathic helix 4 (AH4)" evidence="1">
    <location>
        <begin position="232"/>
        <end position="248"/>
    </location>
</feature>
<feature type="short sequence motif" description="WxxxF/Y motif 1" evidence="1">
    <location>
        <begin position="99"/>
        <end position="103"/>
    </location>
</feature>
<feature type="short sequence motif" description="WxxxF/Y motif 2" evidence="1">
    <location>
        <begin position="128"/>
        <end position="132"/>
    </location>
</feature>
<feature type="short sequence motif" description="WxxxF/Y motif 3" evidence="1">
    <location>
        <begin position="192"/>
        <end position="196"/>
    </location>
</feature>
<feature type="short sequence motif" description="WxxxF/Y motif 4" evidence="1">
    <location>
        <begin position="271"/>
        <end position="275"/>
    </location>
</feature>
<feature type="compositionally biased region" description="Polar residues" evidence="4">
    <location>
        <begin position="31"/>
        <end position="45"/>
    </location>
</feature>
<feature type="cross-link" description="Glycyl cysteine thioester (Cys-Gly) (interchain with G-Cter in ubiquitin)" evidence="2">
    <location>
        <position position="10"/>
    </location>
</feature>
<feature type="cross-link" description="Glycyl lysine isopeptide (Lys-Gly) (interchain with G-Cter in ubiquitin)" evidence="2">
    <location>
        <position position="22"/>
    </location>
</feature>